<feature type="chain" id="PRO_0000405328" description="Coatomer subunit gamma">
    <location>
        <begin position="1"/>
        <end position="878"/>
    </location>
</feature>
<feature type="repeat" description="HEAT 1">
    <location>
        <begin position="64"/>
        <end position="101"/>
    </location>
</feature>
<feature type="repeat" description="HEAT 2">
    <location>
        <begin position="287"/>
        <end position="324"/>
    </location>
</feature>
<feature type="repeat" description="HEAT 3">
    <location>
        <begin position="326"/>
        <end position="359"/>
    </location>
</feature>
<feature type="repeat" description="HEAT 4">
    <location>
        <begin position="360"/>
        <end position="396"/>
    </location>
</feature>
<feature type="repeat" description="HEAT 5">
    <location>
        <begin position="399"/>
        <end position="434"/>
    </location>
</feature>
<feature type="repeat" description="HEAT 6">
    <location>
        <begin position="471"/>
        <end position="508"/>
    </location>
</feature>
<organism>
    <name type="scientific">Drosophila pseudoobscura pseudoobscura</name>
    <name type="common">Fruit fly</name>
    <dbReference type="NCBI Taxonomy" id="46245"/>
    <lineage>
        <taxon>Eukaryota</taxon>
        <taxon>Metazoa</taxon>
        <taxon>Ecdysozoa</taxon>
        <taxon>Arthropoda</taxon>
        <taxon>Hexapoda</taxon>
        <taxon>Insecta</taxon>
        <taxon>Pterygota</taxon>
        <taxon>Neoptera</taxon>
        <taxon>Endopterygota</taxon>
        <taxon>Diptera</taxon>
        <taxon>Brachycera</taxon>
        <taxon>Muscomorpha</taxon>
        <taxon>Ephydroidea</taxon>
        <taxon>Drosophilidae</taxon>
        <taxon>Drosophila</taxon>
        <taxon>Sophophora</taxon>
    </lineage>
</organism>
<keyword id="KW-0963">Cytoplasm</keyword>
<keyword id="KW-0968">Cytoplasmic vesicle</keyword>
<keyword id="KW-0256">Endoplasmic reticulum</keyword>
<keyword id="KW-0931">ER-Golgi transport</keyword>
<keyword id="KW-0333">Golgi apparatus</keyword>
<keyword id="KW-0472">Membrane</keyword>
<keyword id="KW-0653">Protein transport</keyword>
<keyword id="KW-1185">Reference proteome</keyword>
<keyword id="KW-0677">Repeat</keyword>
<keyword id="KW-0813">Transport</keyword>
<evidence type="ECO:0000250" key="1"/>
<evidence type="ECO:0000250" key="2">
    <source>
        <dbReference type="UniProtKB" id="P32074"/>
    </source>
</evidence>
<evidence type="ECO:0000250" key="3">
    <source>
        <dbReference type="UniProtKB" id="P53622"/>
    </source>
</evidence>
<evidence type="ECO:0000250" key="4">
    <source>
        <dbReference type="UniProtKB" id="Q8I0G5"/>
    </source>
</evidence>
<evidence type="ECO:0000255" key="5"/>
<evidence type="ECO:0000312" key="6">
    <source>
        <dbReference type="EMBL" id="EAL27405.1"/>
    </source>
</evidence>
<reference evidence="6" key="1">
    <citation type="journal article" date="2005" name="Genome Res.">
        <title>Comparative genome sequencing of Drosophila pseudoobscura: chromosomal, gene, and cis-element evolution.</title>
        <authorList>
            <person name="Richards S."/>
            <person name="Liu Y."/>
            <person name="Bettencourt B.R."/>
            <person name="Hradecky P."/>
            <person name="Letovsky S."/>
            <person name="Nielsen R."/>
            <person name="Thornton K."/>
            <person name="Hubisz M.J."/>
            <person name="Chen R."/>
            <person name="Meisel R.P."/>
            <person name="Couronne O."/>
            <person name="Hua S."/>
            <person name="Smith M.A."/>
            <person name="Zhang P."/>
            <person name="Liu J."/>
            <person name="Bussemaker H.J."/>
            <person name="van Batenburg M.F."/>
            <person name="Howells S.L."/>
            <person name="Scherer S.E."/>
            <person name="Sodergren E."/>
            <person name="Matthews B.B."/>
            <person name="Crosby M.A."/>
            <person name="Schroeder A.J."/>
            <person name="Ortiz-Barrientos D."/>
            <person name="Rives C.M."/>
            <person name="Metzker M.L."/>
            <person name="Muzny D.M."/>
            <person name="Scott G."/>
            <person name="Steffen D."/>
            <person name="Wheeler D.A."/>
            <person name="Worley K.C."/>
            <person name="Havlak P."/>
            <person name="Durbin K.J."/>
            <person name="Egan A."/>
            <person name="Gill R."/>
            <person name="Hume J."/>
            <person name="Morgan M.B."/>
            <person name="Miner G."/>
            <person name="Hamilton C."/>
            <person name="Huang Y."/>
            <person name="Waldron L."/>
            <person name="Verduzco D."/>
            <person name="Clerc-Blankenburg K.P."/>
            <person name="Dubchak I."/>
            <person name="Noor M.A.F."/>
            <person name="Anderson W."/>
            <person name="White K.P."/>
            <person name="Clark A.G."/>
            <person name="Schaeffer S.W."/>
            <person name="Gelbart W.M."/>
            <person name="Weinstock G.M."/>
            <person name="Gibbs R.A."/>
        </authorList>
    </citation>
    <scope>NUCLEOTIDE SEQUENCE [LARGE SCALE GENOMIC DNA]</scope>
    <source>
        <strain>MV2-25 / Tucson 14011-0121.94</strain>
    </source>
</reference>
<dbReference type="EMBL" id="CM000070">
    <property type="protein sequence ID" value="EAL27405.1"/>
    <property type="molecule type" value="Genomic_DNA"/>
</dbReference>
<dbReference type="SMR" id="Q29AE5"/>
<dbReference type="FunCoup" id="Q29AE5">
    <property type="interactions" value="2266"/>
</dbReference>
<dbReference type="STRING" id="46245.Q29AE5"/>
<dbReference type="eggNOG" id="KOG1078">
    <property type="taxonomic scope" value="Eukaryota"/>
</dbReference>
<dbReference type="HOGENOM" id="CLU_010353_2_0_1"/>
<dbReference type="InParanoid" id="Q29AE5"/>
<dbReference type="OMA" id="DFIEDCE"/>
<dbReference type="PhylomeDB" id="Q29AE5"/>
<dbReference type="Proteomes" id="UP000001819">
    <property type="component" value="Unplaced"/>
</dbReference>
<dbReference type="GO" id="GO:0030126">
    <property type="term" value="C:COPI vesicle coat"/>
    <property type="evidence" value="ECO:0007669"/>
    <property type="project" value="InterPro"/>
</dbReference>
<dbReference type="GO" id="GO:0005783">
    <property type="term" value="C:endoplasmic reticulum"/>
    <property type="evidence" value="ECO:0007669"/>
    <property type="project" value="UniProtKB-SubCell"/>
</dbReference>
<dbReference type="GO" id="GO:0005793">
    <property type="term" value="C:endoplasmic reticulum-Golgi intermediate compartment"/>
    <property type="evidence" value="ECO:0007669"/>
    <property type="project" value="TreeGrafter"/>
</dbReference>
<dbReference type="GO" id="GO:0000139">
    <property type="term" value="C:Golgi membrane"/>
    <property type="evidence" value="ECO:0007669"/>
    <property type="project" value="UniProtKB-SubCell"/>
</dbReference>
<dbReference type="GO" id="GO:0005198">
    <property type="term" value="F:structural molecule activity"/>
    <property type="evidence" value="ECO:0007669"/>
    <property type="project" value="InterPro"/>
</dbReference>
<dbReference type="GO" id="GO:0006888">
    <property type="term" value="P:endoplasmic reticulum to Golgi vesicle-mediated transport"/>
    <property type="evidence" value="ECO:0007669"/>
    <property type="project" value="TreeGrafter"/>
</dbReference>
<dbReference type="GO" id="GO:0006891">
    <property type="term" value="P:intra-Golgi vesicle-mediated transport"/>
    <property type="evidence" value="ECO:0007669"/>
    <property type="project" value="TreeGrafter"/>
</dbReference>
<dbReference type="GO" id="GO:0006886">
    <property type="term" value="P:intracellular protein transport"/>
    <property type="evidence" value="ECO:0007669"/>
    <property type="project" value="InterPro"/>
</dbReference>
<dbReference type="GO" id="GO:0072384">
    <property type="term" value="P:organelle transport along microtubule"/>
    <property type="evidence" value="ECO:0007669"/>
    <property type="project" value="TreeGrafter"/>
</dbReference>
<dbReference type="GO" id="GO:0009306">
    <property type="term" value="P:protein secretion"/>
    <property type="evidence" value="ECO:0007669"/>
    <property type="project" value="TreeGrafter"/>
</dbReference>
<dbReference type="FunFam" id="1.25.10.10:FF:000038">
    <property type="entry name" value="Coatomer subunit gamma"/>
    <property type="match status" value="1"/>
</dbReference>
<dbReference type="FunFam" id="1.25.10.10:FF:000071">
    <property type="entry name" value="Coatomer subunit gamma"/>
    <property type="match status" value="1"/>
</dbReference>
<dbReference type="FunFam" id="2.60.40.1480:FF:000001">
    <property type="entry name" value="Coatomer subunit gamma"/>
    <property type="match status" value="1"/>
</dbReference>
<dbReference type="FunFam" id="3.30.310.10:FF:000011">
    <property type="entry name" value="Coatomer subunit gamma"/>
    <property type="match status" value="1"/>
</dbReference>
<dbReference type="Gene3D" id="2.60.40.1480">
    <property type="entry name" value="Coatomer, gamma subunit, appendage domain"/>
    <property type="match status" value="1"/>
</dbReference>
<dbReference type="Gene3D" id="1.25.10.10">
    <property type="entry name" value="Leucine-rich Repeat Variant"/>
    <property type="match status" value="2"/>
</dbReference>
<dbReference type="Gene3D" id="3.30.310.10">
    <property type="entry name" value="TATA-Binding Protein"/>
    <property type="match status" value="1"/>
</dbReference>
<dbReference type="InterPro" id="IPR011989">
    <property type="entry name" value="ARM-like"/>
</dbReference>
<dbReference type="InterPro" id="IPR016024">
    <property type="entry name" value="ARM-type_fold"/>
</dbReference>
<dbReference type="InterPro" id="IPR002553">
    <property type="entry name" value="Clathrin/coatomer_adapt-like_N"/>
</dbReference>
<dbReference type="InterPro" id="IPR013041">
    <property type="entry name" value="Clathrin_app_Ig-like_sf"/>
</dbReference>
<dbReference type="InterPro" id="IPR009028">
    <property type="entry name" value="Coatomer/calthrin_app_sub_C"/>
</dbReference>
<dbReference type="InterPro" id="IPR032154">
    <property type="entry name" value="Coatomer_g_Cpla"/>
</dbReference>
<dbReference type="InterPro" id="IPR017106">
    <property type="entry name" value="Coatomer_gsu"/>
</dbReference>
<dbReference type="InterPro" id="IPR013040">
    <property type="entry name" value="Coatomer_gsu_app_Ig-like_dom"/>
</dbReference>
<dbReference type="InterPro" id="IPR037067">
    <property type="entry name" value="Coatomer_gsu_app_sf"/>
</dbReference>
<dbReference type="InterPro" id="IPR012295">
    <property type="entry name" value="TBP_dom_sf"/>
</dbReference>
<dbReference type="PANTHER" id="PTHR10261">
    <property type="entry name" value="COATOMER SUBUNIT GAMMA"/>
    <property type="match status" value="1"/>
</dbReference>
<dbReference type="PANTHER" id="PTHR10261:SF0">
    <property type="entry name" value="COATOMER SUBUNIT GAMMA-2"/>
    <property type="match status" value="1"/>
</dbReference>
<dbReference type="Pfam" id="PF01602">
    <property type="entry name" value="Adaptin_N"/>
    <property type="match status" value="1"/>
</dbReference>
<dbReference type="Pfam" id="PF16381">
    <property type="entry name" value="Coatomer_g_Cpla"/>
    <property type="match status" value="1"/>
</dbReference>
<dbReference type="Pfam" id="PF08752">
    <property type="entry name" value="COP-gamma_platf"/>
    <property type="match status" value="1"/>
</dbReference>
<dbReference type="PIRSF" id="PIRSF037093">
    <property type="entry name" value="Coatomer_gamma_subunit"/>
    <property type="match status" value="1"/>
</dbReference>
<dbReference type="SUPFAM" id="SSF48371">
    <property type="entry name" value="ARM repeat"/>
    <property type="match status" value="1"/>
</dbReference>
<dbReference type="SUPFAM" id="SSF49348">
    <property type="entry name" value="Clathrin adaptor appendage domain"/>
    <property type="match status" value="1"/>
</dbReference>
<dbReference type="SUPFAM" id="SSF55711">
    <property type="entry name" value="Subdomain of clathrin and coatomer appendage domain"/>
    <property type="match status" value="1"/>
</dbReference>
<name>COPG_DROPS</name>
<gene>
    <name evidence="4" type="primary">gammaCop</name>
    <name type="ORF">GA13624</name>
</gene>
<comment type="function">
    <text evidence="1">The coatomer is a cytosolic protein complex that binds to dilysine motifs and reversibly associates with Golgi non-clathrin-coated vesicles, which further mediate biosynthetic protein transport from the ER, via the Golgi up to the trans Golgi network. Coatomer complex is required for budding from Golgi membranes, and is essential for the retrograde Golgi-to-ER transport of dilysine-tagged proteins. Required for limiting lipid storage in lipid droplets. Involved in the expansion of luminal extracellular matrices and apical membrane during tubulogenesis. Required in the tracheal epithelium for luminal protein secretion and diametric tube growth. In salivary glands, required for deposition of O-glycans and luminal extracellular matrix assembly. Required for epidermal morphogenesis and cuticle development (By similarity).</text>
</comment>
<comment type="subunit">
    <text evidence="2 3">Oligomeric complex that consists of at least the alpha, beta, beta', gamma, delta, epsilon and zeta subunits.</text>
</comment>
<comment type="subcellular location">
    <subcellularLocation>
        <location evidence="2 3 4">Cytoplasm</location>
    </subcellularLocation>
    <subcellularLocation>
        <location evidence="2 3 4">Golgi apparatus membrane</location>
        <topology evidence="2 3 4">Peripheral membrane protein</topology>
        <orientation evidence="2 3 4">Cytoplasmic side</orientation>
    </subcellularLocation>
    <subcellularLocation>
        <location evidence="2 3 4">Cytoplasmic vesicle</location>
        <location evidence="2 3 4">COPI-coated vesicle membrane</location>
        <topology evidence="2 3 4">Peripheral membrane protein</topology>
        <orientation evidence="2 3 4">Cytoplasmic side</orientation>
    </subcellularLocation>
    <subcellularLocation>
        <location evidence="2 3 4">Endoplasmic reticulum</location>
    </subcellularLocation>
    <text evidence="2 3 4">The coatomer is cytoplasmic or polymerized on the cytoplasmic side of the Golgi, as well as on the vesicles/buds originating from it.</text>
</comment>
<comment type="similarity">
    <text evidence="5">Belongs to the COPG family.</text>
</comment>
<sequence>MGSFRRDKEEEDDGPTNAYQNLEKTSVLQETRTFNETPVNARKCIHILTKILYLINQGETLVPREATDCFFAMTKLFQSKDVVLRRMVYLGIKELSSVAEDVIIVTSSLTKDMTGKEDLYRAAAIRALCSITDHTMLQAVERYMKQCIVDKNAAVSCAALVSSLRLATTAGDVVKRWANEAQEAMNSDNIMVQYHALGLLYHIRKSDRLAVSKLVNKLTRSSLKSPYAVCMLIRIACKLIEEEDIPSEELSDSPLFTFIETCLRHKSEMVIYEAAHAIVNLKNTNHRMLSPAFSILQLFCSSPKATLRFAAVRTLNKVAMTHPAAVTTCNLDLEGLITDSNRSVATLAITTLLKTGAESSVERLMKQISTFVAEISDEFKIVVVQAICALCTKYPRKHTVLMNFLSGMLREEGGLEYKTSIVDTIITIIEENADAKESGLSHLCEFIEDCEHVSLAVRILHLMGKEGPFAATPSKYIRFIYNRVILESPIVRAAAVTALSQFGASCPALLTNILVLLGRCQMDPDDEVRDRATYYLTILNTERADLYKNYIIERENCSLALLEKALVDHLNGDLEKRFDISVVPKAAAVVRAEISNDVMLVTSAPRPPKITREEESASRLAQLPGIQVLGPVHRSTAPIQLTESETEYTVQCIKHIFGQHVVFQFDCLNTLSDQFLENVRVELTLPEGFTTRAVVPCPKLPYNELQTTYVIVEFPPDAGSSIATFGATLRFVVKDCDPNTGEPDSEEGYDDEYMLEDMEITVADQIQKSKKNNFQVAWDAADSEEWLQAEDTFVLSAVTTLQDAVNTIMKILGLGSANLSEKVPEGTHLHTLLCSGTFRGGAEVLVRAKLALSEGVTLNLTVRSTDQDVAELITAAIG</sequence>
<protein>
    <recommendedName>
        <fullName evidence="4">Coatomer subunit gamma</fullName>
    </recommendedName>
    <alternativeName>
        <fullName evidence="4">Gamma-coat protein</fullName>
        <shortName evidence="4">Gamma-COP</shortName>
    </alternativeName>
</protein>
<proteinExistence type="inferred from homology"/>
<accession>Q29AE5</accession>